<accession>B3A0N3</accession>
<dbReference type="EC" id="3.1.1.4" evidence="5"/>
<dbReference type="SMR" id="B3A0N3"/>
<dbReference type="GO" id="GO:0005576">
    <property type="term" value="C:extracellular region"/>
    <property type="evidence" value="ECO:0000314"/>
    <property type="project" value="UniProtKB"/>
</dbReference>
<dbReference type="GO" id="GO:0005509">
    <property type="term" value="F:calcium ion binding"/>
    <property type="evidence" value="ECO:0007669"/>
    <property type="project" value="InterPro"/>
</dbReference>
<dbReference type="GO" id="GO:0047498">
    <property type="term" value="F:calcium-dependent phospholipase A2 activity"/>
    <property type="evidence" value="ECO:0007669"/>
    <property type="project" value="TreeGrafter"/>
</dbReference>
<dbReference type="GO" id="GO:0004623">
    <property type="term" value="F:phospholipase A2 activity"/>
    <property type="evidence" value="ECO:0000314"/>
    <property type="project" value="UniProtKB"/>
</dbReference>
<dbReference type="GO" id="GO:0005543">
    <property type="term" value="F:phospholipid binding"/>
    <property type="evidence" value="ECO:0007669"/>
    <property type="project" value="TreeGrafter"/>
</dbReference>
<dbReference type="GO" id="GO:0090729">
    <property type="term" value="F:toxin activity"/>
    <property type="evidence" value="ECO:0007669"/>
    <property type="project" value="UniProtKB-KW"/>
</dbReference>
<dbReference type="GO" id="GO:0050482">
    <property type="term" value="P:arachidonate secretion"/>
    <property type="evidence" value="ECO:0007669"/>
    <property type="project" value="InterPro"/>
</dbReference>
<dbReference type="GO" id="GO:0042130">
    <property type="term" value="P:negative regulation of T cell proliferation"/>
    <property type="evidence" value="ECO:0007669"/>
    <property type="project" value="TreeGrafter"/>
</dbReference>
<dbReference type="GO" id="GO:0009395">
    <property type="term" value="P:phospholipid catabolic process"/>
    <property type="evidence" value="ECO:0000314"/>
    <property type="project" value="UniProtKB"/>
</dbReference>
<dbReference type="GO" id="GO:0044487">
    <property type="term" value="P:venom-mediated perturbation of transmission of nerve impulse in another organism"/>
    <property type="evidence" value="ECO:0000314"/>
    <property type="project" value="UniProtKB"/>
</dbReference>
<dbReference type="Gene3D" id="1.20.90.10">
    <property type="entry name" value="Phospholipase A2 domain"/>
    <property type="match status" value="1"/>
</dbReference>
<dbReference type="InterPro" id="IPR001211">
    <property type="entry name" value="PLipase_A2"/>
</dbReference>
<dbReference type="InterPro" id="IPR016090">
    <property type="entry name" value="PLipase_A2_dom"/>
</dbReference>
<dbReference type="InterPro" id="IPR036444">
    <property type="entry name" value="PLipase_A2_dom_sf"/>
</dbReference>
<dbReference type="PANTHER" id="PTHR11716">
    <property type="entry name" value="PHOSPHOLIPASE A2 FAMILY MEMBER"/>
    <property type="match status" value="1"/>
</dbReference>
<dbReference type="PANTHER" id="PTHR11716:SF9">
    <property type="entry name" value="PHOSPHOLIPASE A2, MEMBRANE ASSOCIATED"/>
    <property type="match status" value="1"/>
</dbReference>
<dbReference type="Pfam" id="PF00068">
    <property type="entry name" value="Phospholip_A2_1"/>
    <property type="match status" value="1"/>
</dbReference>
<dbReference type="PRINTS" id="PR00389">
    <property type="entry name" value="PHPHLIPASEA2"/>
</dbReference>
<dbReference type="SUPFAM" id="SSF48619">
    <property type="entry name" value="Phospholipase A2, PLA2"/>
    <property type="match status" value="1"/>
</dbReference>
<sequence length="50" mass="5714">DLWQWGQMILKETGKLPFSYYTAYGCYCGWGGRGGKPKADTDRCCFVHDC</sequence>
<protein>
    <recommendedName>
        <fullName evidence="6">Basic phospholipase A2 Bmaj-9</fullName>
        <shortName evidence="6">svPLA2</shortName>
        <ecNumber evidence="5">3.1.1.4</ecNumber>
    </recommendedName>
    <alternativeName>
        <fullName evidence="2">Phosphatidylcholine 2-acylhydrolase</fullName>
    </alternativeName>
</protein>
<organism>
    <name type="scientific">Bothrops marajoensis</name>
    <name type="common">Marajo lancehead</name>
    <dbReference type="NCBI Taxonomy" id="157554"/>
    <lineage>
        <taxon>Eukaryota</taxon>
        <taxon>Metazoa</taxon>
        <taxon>Chordata</taxon>
        <taxon>Craniata</taxon>
        <taxon>Vertebrata</taxon>
        <taxon>Euteleostomi</taxon>
        <taxon>Lepidosauria</taxon>
        <taxon>Squamata</taxon>
        <taxon>Bifurcata</taxon>
        <taxon>Unidentata</taxon>
        <taxon>Episquamata</taxon>
        <taxon>Toxicofera</taxon>
        <taxon>Serpentes</taxon>
        <taxon>Colubroidea</taxon>
        <taxon>Viperidae</taxon>
        <taxon>Crotalinae</taxon>
        <taxon>Bothrops</taxon>
    </lineage>
</organism>
<name>PA2B3_BOTMA</name>
<reference key="1">
    <citation type="journal article" date="2012" name="J. Venom. Anim. Toxins Incl. Trop. Dis.">
        <title>Pharmacological and partial biochemical characterization of Bmaj-9 isolated from Bothrops marajoensis snake venom.</title>
        <authorList>
            <person name="Galbiatti C."/>
            <person name="Rocha T."/>
            <person name="Randazzo-Moura P."/>
            <person name="Ponce-Soto L.A."/>
            <person name="Marangoni S."/>
            <person name="Cruz-Hoefling M.A."/>
            <person name="Rodrigues-Simioni L."/>
        </authorList>
    </citation>
    <scope>PROTEIN SEQUENCE</scope>
    <scope>FUNCTION</scope>
    <scope>CATALYTIC ACTIVITY</scope>
    <scope>SUBCELLULAR LOCATION</scope>
    <scope>MASS SPECTROMETRY</scope>
    <source>
        <tissue evidence="6">Venom</tissue>
    </source>
</reference>
<comment type="function">
    <text evidence="5">Snake venom phospholipase A2 (PLA2) that causes irreversible neuromuscular blockade in chick biventer cervicis muscle preparations. The neuromuscular blockade is mediated by inhibitory action at the presynaptic motor nerve endings. PLA2 catalyzes the calcium-dependent hydrolysis of the 2-acyl groups in 3-sn-phosphoglycerides.</text>
</comment>
<comment type="catalytic activity">
    <reaction evidence="3 4 5">
        <text>a 1,2-diacyl-sn-glycero-3-phosphocholine + H2O = a 1-acyl-sn-glycero-3-phosphocholine + a fatty acid + H(+)</text>
        <dbReference type="Rhea" id="RHEA:15801"/>
        <dbReference type="ChEBI" id="CHEBI:15377"/>
        <dbReference type="ChEBI" id="CHEBI:15378"/>
        <dbReference type="ChEBI" id="CHEBI:28868"/>
        <dbReference type="ChEBI" id="CHEBI:57643"/>
        <dbReference type="ChEBI" id="CHEBI:58168"/>
        <dbReference type="EC" id="3.1.1.4"/>
    </reaction>
</comment>
<comment type="cofactor">
    <cofactor evidence="1">
        <name>Ca(2+)</name>
        <dbReference type="ChEBI" id="CHEBI:29108"/>
    </cofactor>
    <text evidence="1">Binds 1 Ca(2+) ion.</text>
</comment>
<comment type="subcellular location">
    <subcellularLocation>
        <location evidence="5">Secreted</location>
    </subcellularLocation>
</comment>
<comment type="tissue specificity">
    <text evidence="8">Expressed by the venom gland.</text>
</comment>
<comment type="mass spectrometry" mass="13679.33" method="MALDI" evidence="5"/>
<comment type="miscellaneous">
    <text evidence="5">Negative results: does not show myotoxicity.</text>
</comment>
<comment type="similarity">
    <text evidence="7">Belongs to the phospholipase A2 family. Group II subfamily. D49 sub-subfamily.</text>
</comment>
<proteinExistence type="evidence at protein level"/>
<keyword id="KW-0106">Calcium</keyword>
<keyword id="KW-0903">Direct protein sequencing</keyword>
<keyword id="KW-1015">Disulfide bond</keyword>
<keyword id="KW-0378">Hydrolase</keyword>
<keyword id="KW-0442">Lipid degradation</keyword>
<keyword id="KW-0443">Lipid metabolism</keyword>
<keyword id="KW-0479">Metal-binding</keyword>
<keyword id="KW-0528">Neurotoxin</keyword>
<keyword id="KW-0638">Presynaptic neurotoxin</keyword>
<keyword id="KW-0964">Secreted</keyword>
<keyword id="KW-0800">Toxin</keyword>
<feature type="chain" id="PRO_0000414628" description="Basic phospholipase A2 Bmaj-9" evidence="5">
    <location>
        <begin position="1"/>
        <end position="50" status="greater than"/>
    </location>
</feature>
<feature type="active site" evidence="1 3 4">
    <location>
        <position position="48"/>
    </location>
</feature>
<feature type="binding site" evidence="1">
    <location>
        <position position="27"/>
    </location>
    <ligand>
        <name>Ca(2+)</name>
        <dbReference type="ChEBI" id="CHEBI:29108"/>
    </ligand>
</feature>
<feature type="binding site" evidence="1">
    <location>
        <position position="29"/>
    </location>
    <ligand>
        <name>Ca(2+)</name>
        <dbReference type="ChEBI" id="CHEBI:29108"/>
    </ligand>
</feature>
<feature type="binding site" evidence="1">
    <location>
        <position position="31"/>
    </location>
    <ligand>
        <name>Ca(2+)</name>
        <dbReference type="ChEBI" id="CHEBI:29108"/>
    </ligand>
</feature>
<feature type="binding site" evidence="1">
    <location>
        <position position="49"/>
    </location>
    <ligand>
        <name>Ca(2+)</name>
        <dbReference type="ChEBI" id="CHEBI:29108"/>
    </ligand>
</feature>
<feature type="disulfide bond" evidence="1">
    <location>
        <begin position="26"/>
        <end status="unknown"/>
    </location>
</feature>
<feature type="disulfide bond" evidence="1">
    <location>
        <begin position="28"/>
        <end position="45"/>
    </location>
</feature>
<feature type="disulfide bond" evidence="1">
    <location>
        <begin position="44"/>
        <end status="unknown"/>
    </location>
</feature>
<feature type="disulfide bond" evidence="1">
    <location>
        <begin position="50"/>
        <end status="unknown"/>
    </location>
</feature>
<feature type="non-terminal residue" evidence="6">
    <location>
        <position position="50"/>
    </location>
</feature>
<evidence type="ECO:0000250" key="1">
    <source>
        <dbReference type="UniProtKB" id="P59071"/>
    </source>
</evidence>
<evidence type="ECO:0000250" key="2">
    <source>
        <dbReference type="UniProtKB" id="P86804"/>
    </source>
</evidence>
<evidence type="ECO:0000255" key="3">
    <source>
        <dbReference type="PROSITE-ProRule" id="PRU10035"/>
    </source>
</evidence>
<evidence type="ECO:0000255" key="4">
    <source>
        <dbReference type="PROSITE-ProRule" id="PRU10036"/>
    </source>
</evidence>
<evidence type="ECO:0000269" key="5">
    <source ref="1"/>
</evidence>
<evidence type="ECO:0000303" key="6">
    <source ref="1"/>
</evidence>
<evidence type="ECO:0000305" key="7"/>
<evidence type="ECO:0000305" key="8">
    <source ref="1"/>
</evidence>